<protein>
    <recommendedName>
        <fullName evidence="1">UPF0246 protein SPs1787</fullName>
    </recommendedName>
</protein>
<dbReference type="EMBL" id="BA000034">
    <property type="protein sequence ID" value="BAC64882.1"/>
    <property type="molecule type" value="Genomic_DNA"/>
</dbReference>
<dbReference type="SMR" id="P0DG97"/>
<dbReference type="KEGG" id="sps:SPs1787"/>
<dbReference type="HOGENOM" id="CLU_061989_2_1_9"/>
<dbReference type="GO" id="GO:0005829">
    <property type="term" value="C:cytosol"/>
    <property type="evidence" value="ECO:0007669"/>
    <property type="project" value="TreeGrafter"/>
</dbReference>
<dbReference type="GO" id="GO:0033194">
    <property type="term" value="P:response to hydroperoxide"/>
    <property type="evidence" value="ECO:0007669"/>
    <property type="project" value="TreeGrafter"/>
</dbReference>
<dbReference type="HAMAP" id="MF_00652">
    <property type="entry name" value="UPF0246"/>
    <property type="match status" value="1"/>
</dbReference>
<dbReference type="InterPro" id="IPR005583">
    <property type="entry name" value="YaaA"/>
</dbReference>
<dbReference type="NCBIfam" id="NF002543">
    <property type="entry name" value="PRK02101.1-4"/>
    <property type="match status" value="1"/>
</dbReference>
<dbReference type="PANTHER" id="PTHR30283:SF4">
    <property type="entry name" value="PEROXIDE STRESS RESISTANCE PROTEIN YAAA"/>
    <property type="match status" value="1"/>
</dbReference>
<dbReference type="PANTHER" id="PTHR30283">
    <property type="entry name" value="PEROXIDE STRESS RESPONSE PROTEIN YAAA"/>
    <property type="match status" value="1"/>
</dbReference>
<dbReference type="Pfam" id="PF03883">
    <property type="entry name" value="H2O2_YaaD"/>
    <property type="match status" value="1"/>
</dbReference>
<sequence>MLTFLIPTAKEMTIPKESHPHLLPQDSQAILKIMAAMTTEDLAKAYRIKEEAAKKEQQRWQDMASQKSLAYPAYQLFNGLMYRHIKRDKLTTQEQAYLTQQVYITSSFYGIIPANHPIAEHRHDFHTRIKIEGQSLKSYWRPCYNQFAKEHPQVISLLSSEFDDVFSKDCKQLWISPKFMAEKEGQFKTHSTISKKARGAFLTACMENNCQTVDSLKSLVFAGFYYHPDLSTDHEFVYIKKEA</sequence>
<proteinExistence type="inferred from homology"/>
<comment type="similarity">
    <text evidence="1">Belongs to the UPF0246 family.</text>
</comment>
<feature type="chain" id="PRO_0000411638" description="UPF0246 protein SPs1787">
    <location>
        <begin position="1"/>
        <end position="243"/>
    </location>
</feature>
<organism>
    <name type="scientific">Streptococcus pyogenes serotype M3 (strain SSI-1)</name>
    <dbReference type="NCBI Taxonomy" id="193567"/>
    <lineage>
        <taxon>Bacteria</taxon>
        <taxon>Bacillati</taxon>
        <taxon>Bacillota</taxon>
        <taxon>Bacilli</taxon>
        <taxon>Lactobacillales</taxon>
        <taxon>Streptococcaceae</taxon>
        <taxon>Streptococcus</taxon>
    </lineage>
</organism>
<evidence type="ECO:0000255" key="1">
    <source>
        <dbReference type="HAMAP-Rule" id="MF_00652"/>
    </source>
</evidence>
<name>Y1790_STRPQ</name>
<gene>
    <name type="ordered locus">SPs1787</name>
</gene>
<reference key="1">
    <citation type="journal article" date="2003" name="Genome Res.">
        <title>Genome sequence of an M3 strain of Streptococcus pyogenes reveals a large-scale genomic rearrangement in invasive strains and new insights into phage evolution.</title>
        <authorList>
            <person name="Nakagawa I."/>
            <person name="Kurokawa K."/>
            <person name="Yamashita A."/>
            <person name="Nakata M."/>
            <person name="Tomiyasu Y."/>
            <person name="Okahashi N."/>
            <person name="Kawabata S."/>
            <person name="Yamazaki K."/>
            <person name="Shiba T."/>
            <person name="Yasunaga T."/>
            <person name="Hayashi H."/>
            <person name="Hattori M."/>
            <person name="Hamada S."/>
        </authorList>
    </citation>
    <scope>NUCLEOTIDE SEQUENCE [LARGE SCALE GENOMIC DNA]</scope>
    <source>
        <strain>SSI-1</strain>
    </source>
</reference>
<accession>P0DG97</accession>
<accession>Q8K5K6</accession>